<gene>
    <name type="primary">PDF1.2B</name>
    <name type="ordered locus">At2g26020</name>
    <name type="ORF">T19L18.17</name>
</gene>
<dbReference type="EMBL" id="AC004747">
    <property type="protein sequence ID" value="AAC31244.1"/>
    <property type="molecule type" value="Genomic_DNA"/>
</dbReference>
<dbReference type="EMBL" id="CP002685">
    <property type="protein sequence ID" value="AEC07784.1"/>
    <property type="molecule type" value="Genomic_DNA"/>
</dbReference>
<dbReference type="PIR" id="T02621">
    <property type="entry name" value="T02621"/>
</dbReference>
<dbReference type="RefSeq" id="NP_180172.1">
    <property type="nucleotide sequence ID" value="NM_128161.2"/>
</dbReference>
<dbReference type="SMR" id="O80994"/>
<dbReference type="FunCoup" id="O80994">
    <property type="interactions" value="137"/>
</dbReference>
<dbReference type="STRING" id="3702.O80994"/>
<dbReference type="PaxDb" id="3702-AT2G26020.1"/>
<dbReference type="ProteomicsDB" id="224069"/>
<dbReference type="EnsemblPlants" id="AT2G26020.1">
    <property type="protein sequence ID" value="AT2G26020.1"/>
    <property type="gene ID" value="AT2G26020"/>
</dbReference>
<dbReference type="GeneID" id="817143"/>
<dbReference type="Gramene" id="AT2G26020.1">
    <property type="protein sequence ID" value="AT2G26020.1"/>
    <property type="gene ID" value="AT2G26020"/>
</dbReference>
<dbReference type="KEGG" id="ath:AT2G26020"/>
<dbReference type="Araport" id="AT2G26020"/>
<dbReference type="TAIR" id="AT2G26020">
    <property type="gene designation" value="PDF1.2B"/>
</dbReference>
<dbReference type="eggNOG" id="ENOG502SQS4">
    <property type="taxonomic scope" value="Eukaryota"/>
</dbReference>
<dbReference type="HOGENOM" id="CLU_161668_3_0_1"/>
<dbReference type="InParanoid" id="O80994"/>
<dbReference type="OMA" id="EANNACK"/>
<dbReference type="OrthoDB" id="1851987at2759"/>
<dbReference type="PhylomeDB" id="O80994"/>
<dbReference type="PRO" id="PR:O80994"/>
<dbReference type="Proteomes" id="UP000006548">
    <property type="component" value="Chromosome 2"/>
</dbReference>
<dbReference type="ExpressionAtlas" id="O80994">
    <property type="expression patterns" value="baseline and differential"/>
</dbReference>
<dbReference type="GO" id="GO:0005576">
    <property type="term" value="C:extracellular region"/>
    <property type="evidence" value="ECO:0007669"/>
    <property type="project" value="UniProtKB-SubCell"/>
</dbReference>
<dbReference type="GO" id="GO:0006952">
    <property type="term" value="P:defense response"/>
    <property type="evidence" value="ECO:0000250"/>
    <property type="project" value="TAIR"/>
</dbReference>
<dbReference type="GO" id="GO:0050832">
    <property type="term" value="P:defense response to fungus"/>
    <property type="evidence" value="ECO:0007669"/>
    <property type="project" value="UniProtKB-KW"/>
</dbReference>
<dbReference type="GO" id="GO:0031640">
    <property type="term" value="P:killing of cells of another organism"/>
    <property type="evidence" value="ECO:0007669"/>
    <property type="project" value="UniProtKB-KW"/>
</dbReference>
<dbReference type="CDD" id="cd00107">
    <property type="entry name" value="Knot1"/>
    <property type="match status" value="1"/>
</dbReference>
<dbReference type="FunFam" id="3.30.30.10:FF:000003">
    <property type="entry name" value="Defensin-like protein 1"/>
    <property type="match status" value="1"/>
</dbReference>
<dbReference type="Gene3D" id="3.30.30.10">
    <property type="entry name" value="Knottin, scorpion toxin-like"/>
    <property type="match status" value="1"/>
</dbReference>
<dbReference type="InterPro" id="IPR008176">
    <property type="entry name" value="Defensin_plant"/>
</dbReference>
<dbReference type="InterPro" id="IPR003614">
    <property type="entry name" value="Scorpion_toxin-like"/>
</dbReference>
<dbReference type="InterPro" id="IPR036574">
    <property type="entry name" value="Scorpion_toxin-like_sf"/>
</dbReference>
<dbReference type="PANTHER" id="PTHR33147">
    <property type="entry name" value="DEFENSIN-LIKE PROTEIN 1"/>
    <property type="match status" value="1"/>
</dbReference>
<dbReference type="PANTHER" id="PTHR33147:SF37">
    <property type="entry name" value="DEFENSIN-LIKE PROTEIN 14-RELATED"/>
    <property type="match status" value="1"/>
</dbReference>
<dbReference type="Pfam" id="PF00304">
    <property type="entry name" value="Gamma-thionin"/>
    <property type="match status" value="1"/>
</dbReference>
<dbReference type="SMART" id="SM00505">
    <property type="entry name" value="Knot1"/>
    <property type="match status" value="1"/>
</dbReference>
<dbReference type="SUPFAM" id="SSF57095">
    <property type="entry name" value="Scorpion toxin-like"/>
    <property type="match status" value="1"/>
</dbReference>
<dbReference type="PROSITE" id="PS00940">
    <property type="entry name" value="GAMMA_THIONIN"/>
    <property type="match status" value="1"/>
</dbReference>
<reference key="1">
    <citation type="journal article" date="1999" name="Nature">
        <title>Sequence and analysis of chromosome 2 of the plant Arabidopsis thaliana.</title>
        <authorList>
            <person name="Lin X."/>
            <person name="Kaul S."/>
            <person name="Rounsley S.D."/>
            <person name="Shea T.P."/>
            <person name="Benito M.-I."/>
            <person name="Town C.D."/>
            <person name="Fujii C.Y."/>
            <person name="Mason T.M."/>
            <person name="Bowman C.L."/>
            <person name="Barnstead M.E."/>
            <person name="Feldblyum T.V."/>
            <person name="Buell C.R."/>
            <person name="Ketchum K.A."/>
            <person name="Lee J.J."/>
            <person name="Ronning C.M."/>
            <person name="Koo H.L."/>
            <person name="Moffat K.S."/>
            <person name="Cronin L.A."/>
            <person name="Shen M."/>
            <person name="Pai G."/>
            <person name="Van Aken S."/>
            <person name="Umayam L."/>
            <person name="Tallon L.J."/>
            <person name="Gill J.E."/>
            <person name="Adams M.D."/>
            <person name="Carrera A.J."/>
            <person name="Creasy T.H."/>
            <person name="Goodman H.M."/>
            <person name="Somerville C.R."/>
            <person name="Copenhaver G.P."/>
            <person name="Preuss D."/>
            <person name="Nierman W.C."/>
            <person name="White O."/>
            <person name="Eisen J.A."/>
            <person name="Salzberg S.L."/>
            <person name="Fraser C.M."/>
            <person name="Venter J.C."/>
        </authorList>
    </citation>
    <scope>NUCLEOTIDE SEQUENCE [LARGE SCALE GENOMIC DNA]</scope>
    <source>
        <strain>cv. Columbia</strain>
    </source>
</reference>
<reference key="2">
    <citation type="journal article" date="2017" name="Plant J.">
        <title>Araport11: a complete reannotation of the Arabidopsis thaliana reference genome.</title>
        <authorList>
            <person name="Cheng C.Y."/>
            <person name="Krishnakumar V."/>
            <person name="Chan A.P."/>
            <person name="Thibaud-Nissen F."/>
            <person name="Schobel S."/>
            <person name="Town C.D."/>
        </authorList>
    </citation>
    <scope>GENOME REANNOTATION</scope>
    <source>
        <strain>cv. Columbia</strain>
    </source>
</reference>
<reference key="3">
    <citation type="journal article" date="2002" name="Planta">
        <title>Plant defensins.</title>
        <authorList>
            <person name="Thomma B.P.H.J."/>
            <person name="Cammue B.P."/>
            <person name="Thevissen K."/>
        </authorList>
    </citation>
    <scope>GENE FAMILY</scope>
    <scope>NOMENCLATURE</scope>
</reference>
<reference key="4">
    <citation type="journal article" date="2005" name="Plant Physiol.">
        <title>Genome organization of more than 300 defensin-like genes in Arabidopsis.</title>
        <authorList>
            <person name="Silverstein K.A.T."/>
            <person name="Graham M.A."/>
            <person name="Paape T.D."/>
            <person name="VandenBosch K.A."/>
        </authorList>
    </citation>
    <scope>GENE FAMILY</scope>
</reference>
<feature type="signal peptide" evidence="1">
    <location>
        <begin position="1"/>
        <end position="29"/>
    </location>
</feature>
<feature type="chain" id="PRO_0000007021" description="Putative defensin-like protein 15">
    <location>
        <begin position="30"/>
        <end position="80"/>
    </location>
</feature>
<feature type="modified residue" description="Pyrrolidone carboxylic acid" evidence="2">
    <location>
        <position position="30"/>
    </location>
</feature>
<feature type="disulfide bond" evidence="1">
    <location>
        <begin position="33"/>
        <end position="80"/>
    </location>
</feature>
<feature type="disulfide bond" evidence="1">
    <location>
        <begin position="44"/>
        <end position="65"/>
    </location>
</feature>
<feature type="disulfide bond" evidence="1">
    <location>
        <begin position="50"/>
        <end position="74"/>
    </location>
</feature>
<feature type="disulfide bond" evidence="1">
    <location>
        <begin position="54"/>
        <end position="76"/>
    </location>
</feature>
<protein>
    <recommendedName>
        <fullName>Putative defensin-like protein 15</fullName>
    </recommendedName>
    <alternativeName>
        <fullName>Putative cysteine-rich antifungal protein At2g26020</fullName>
    </alternativeName>
    <alternativeName>
        <fullName>Putative plant defensin 1.2b</fullName>
    </alternativeName>
</protein>
<comment type="function">
    <text>Confers broad-spectrum resistance to pathogens.</text>
</comment>
<comment type="subcellular location">
    <subcellularLocation>
        <location evidence="1">Secreted</location>
    </subcellularLocation>
</comment>
<comment type="similarity">
    <text evidence="3">Belongs to the DEFL family.</text>
</comment>
<sequence length="80" mass="8640">MAKFASIITFIYAALVLFAAFEVPTMVEAQKLCEKPSGTWSGVCGNSNACKNQCINLEGAKHGSCNYVFPAHKCICYVPC</sequence>
<name>DEF15_ARATH</name>
<evidence type="ECO:0000250" key="1"/>
<evidence type="ECO:0000250" key="2">
    <source>
        <dbReference type="UniProtKB" id="P30224"/>
    </source>
</evidence>
<evidence type="ECO:0000305" key="3"/>
<keyword id="KW-0929">Antimicrobial</keyword>
<keyword id="KW-1015">Disulfide bond</keyword>
<keyword id="KW-0295">Fungicide</keyword>
<keyword id="KW-0611">Plant defense</keyword>
<keyword id="KW-0873">Pyrrolidone carboxylic acid</keyword>
<keyword id="KW-1185">Reference proteome</keyword>
<keyword id="KW-0964">Secreted</keyword>
<keyword id="KW-0732">Signal</keyword>
<proteinExistence type="inferred from homology"/>
<accession>O80994</accession>
<organism>
    <name type="scientific">Arabidopsis thaliana</name>
    <name type="common">Mouse-ear cress</name>
    <dbReference type="NCBI Taxonomy" id="3702"/>
    <lineage>
        <taxon>Eukaryota</taxon>
        <taxon>Viridiplantae</taxon>
        <taxon>Streptophyta</taxon>
        <taxon>Embryophyta</taxon>
        <taxon>Tracheophyta</taxon>
        <taxon>Spermatophyta</taxon>
        <taxon>Magnoliopsida</taxon>
        <taxon>eudicotyledons</taxon>
        <taxon>Gunneridae</taxon>
        <taxon>Pentapetalae</taxon>
        <taxon>rosids</taxon>
        <taxon>malvids</taxon>
        <taxon>Brassicales</taxon>
        <taxon>Brassicaceae</taxon>
        <taxon>Camelineae</taxon>
        <taxon>Arabidopsis</taxon>
    </lineage>
</organism>